<comment type="function">
    <text evidence="1">Involved in the trafficking of vacuolar proteins. May function as a sorting receptor for protein trafficking to the protein storage vacuole (PSV) (By similarity).</text>
</comment>
<comment type="subcellular location">
    <subcellularLocation>
        <location evidence="1">Prevacuolar compartment membrane</location>
    </subcellularLocation>
    <subcellularLocation>
        <location evidence="1">Protein storage vacuole membrane</location>
        <topology evidence="4">Single-pass type I membrane protein</topology>
    </subcellularLocation>
</comment>
<gene>
    <name type="primary">RMR6</name>
    <name type="ordered locus">At1g35625</name>
    <name type="ORF">F15O4</name>
</gene>
<protein>
    <recommendedName>
        <fullName>Receptor homology region, transmembrane domain- and RING domain-containing protein 6</fullName>
        <shortName>AtRMR6</shortName>
    </recommendedName>
</protein>
<proteinExistence type="inferred from homology"/>
<keyword id="KW-1015">Disulfide bond</keyword>
<keyword id="KW-0325">Glycoprotein</keyword>
<keyword id="KW-0472">Membrane</keyword>
<keyword id="KW-0479">Metal-binding</keyword>
<keyword id="KW-0653">Protein transport</keyword>
<keyword id="KW-1185">Reference proteome</keyword>
<keyword id="KW-0732">Signal</keyword>
<keyword id="KW-0812">Transmembrane</keyword>
<keyword id="KW-1133">Transmembrane helix</keyword>
<keyword id="KW-0813">Transport</keyword>
<keyword id="KW-0926">Vacuole</keyword>
<keyword id="KW-0862">Zinc</keyword>
<keyword id="KW-0863">Zinc-finger</keyword>
<accession>F4HZZ4</accession>
<evidence type="ECO:0000250" key="1"/>
<evidence type="ECO:0000255" key="2"/>
<evidence type="ECO:0000255" key="3">
    <source>
        <dbReference type="PROSITE-ProRule" id="PRU00175"/>
    </source>
</evidence>
<evidence type="ECO:0000305" key="4"/>
<dbReference type="EMBL" id="AC007887">
    <property type="status" value="NOT_ANNOTATED_CDS"/>
    <property type="molecule type" value="Genomic_DNA"/>
</dbReference>
<dbReference type="EMBL" id="CP002684">
    <property type="protein sequence ID" value="AEE31819.2"/>
    <property type="molecule type" value="Genomic_DNA"/>
</dbReference>
<dbReference type="RefSeq" id="NP_001319153.1">
    <property type="nucleotide sequence ID" value="NM_001333165.1"/>
</dbReference>
<dbReference type="SMR" id="F4HZZ4"/>
<dbReference type="FunCoup" id="F4HZZ4">
    <property type="interactions" value="2460"/>
</dbReference>
<dbReference type="STRING" id="3702.F4HZZ4"/>
<dbReference type="GlyCosmos" id="F4HZZ4">
    <property type="glycosylation" value="1 site, No reported glycans"/>
</dbReference>
<dbReference type="GlyGen" id="F4HZZ4">
    <property type="glycosylation" value="1 site"/>
</dbReference>
<dbReference type="PaxDb" id="3702-AT1G35625.1"/>
<dbReference type="EnsemblPlants" id="AT1G35625.1">
    <property type="protein sequence ID" value="AT1G35625.1"/>
    <property type="gene ID" value="AT1G35625"/>
</dbReference>
<dbReference type="GeneID" id="840462"/>
<dbReference type="Gramene" id="AT1G35625.1">
    <property type="protein sequence ID" value="AT1G35625.1"/>
    <property type="gene ID" value="AT1G35625"/>
</dbReference>
<dbReference type="KEGG" id="ath:AT1G35625"/>
<dbReference type="Araport" id="AT1G35625"/>
<dbReference type="TAIR" id="AT1G35625"/>
<dbReference type="eggNOG" id="KOG4628">
    <property type="taxonomic scope" value="Eukaryota"/>
</dbReference>
<dbReference type="HOGENOM" id="CLU_1646794_0_0_1"/>
<dbReference type="InParanoid" id="F4HZZ4"/>
<dbReference type="OMA" id="IGCATHA"/>
<dbReference type="PRO" id="PR:F4HZZ4"/>
<dbReference type="Proteomes" id="UP000006548">
    <property type="component" value="Chromosome 1"/>
</dbReference>
<dbReference type="ExpressionAtlas" id="F4HZZ4">
    <property type="expression patterns" value="baseline and differential"/>
</dbReference>
<dbReference type="GO" id="GO:0012505">
    <property type="term" value="C:endomembrane system"/>
    <property type="evidence" value="ECO:0007669"/>
    <property type="project" value="UniProtKB-ARBA"/>
</dbReference>
<dbReference type="GO" id="GO:0032586">
    <property type="term" value="C:protein storage vacuole membrane"/>
    <property type="evidence" value="ECO:0007669"/>
    <property type="project" value="UniProtKB-SubCell"/>
</dbReference>
<dbReference type="GO" id="GO:0008270">
    <property type="term" value="F:zinc ion binding"/>
    <property type="evidence" value="ECO:0007669"/>
    <property type="project" value="UniProtKB-KW"/>
</dbReference>
<dbReference type="GO" id="GO:0015031">
    <property type="term" value="P:protein transport"/>
    <property type="evidence" value="ECO:0007669"/>
    <property type="project" value="UniProtKB-KW"/>
</dbReference>
<dbReference type="CDD" id="cd02123">
    <property type="entry name" value="PA_C_RZF_like"/>
    <property type="match status" value="1"/>
</dbReference>
<dbReference type="CDD" id="cd16468">
    <property type="entry name" value="RING-H2_RNF11"/>
    <property type="match status" value="1"/>
</dbReference>
<dbReference type="FunFam" id="3.50.30.30:FF:000020">
    <property type="entry name" value="Receptor homology region transmembrane domain-and RING domain-containing protein 2"/>
    <property type="match status" value="1"/>
</dbReference>
<dbReference type="FunFam" id="3.30.40.10:FF:001050">
    <property type="entry name" value="Receptor homology region, transmembrane domain- and RING domain-containing protein 1"/>
    <property type="match status" value="1"/>
</dbReference>
<dbReference type="Gene3D" id="3.50.30.30">
    <property type="match status" value="1"/>
</dbReference>
<dbReference type="Gene3D" id="3.30.40.10">
    <property type="entry name" value="Zinc/RING finger domain, C3HC4 (zinc finger)"/>
    <property type="match status" value="1"/>
</dbReference>
<dbReference type="InterPro" id="IPR051653">
    <property type="entry name" value="E3_ligase_sorting_rcpt"/>
</dbReference>
<dbReference type="InterPro" id="IPR046450">
    <property type="entry name" value="PA_dom_sf"/>
</dbReference>
<dbReference type="InterPro" id="IPR003137">
    <property type="entry name" value="PA_domain"/>
</dbReference>
<dbReference type="InterPro" id="IPR042981">
    <property type="entry name" value="RNF11_RING-H2"/>
</dbReference>
<dbReference type="InterPro" id="IPR001841">
    <property type="entry name" value="Znf_RING"/>
</dbReference>
<dbReference type="InterPro" id="IPR013083">
    <property type="entry name" value="Znf_RING/FYVE/PHD"/>
</dbReference>
<dbReference type="InterPro" id="IPR044744">
    <property type="entry name" value="ZNRF4/RNF13/RNF167_PA"/>
</dbReference>
<dbReference type="PANTHER" id="PTHR47168">
    <property type="entry name" value="RING ZINC FINGER DOMAIN SUPERFAMILY PROTEIN-RELATED"/>
    <property type="match status" value="1"/>
</dbReference>
<dbReference type="PANTHER" id="PTHR47168:SF5">
    <property type="entry name" value="RING-TYPE DOMAIN-CONTAINING PROTEIN"/>
    <property type="match status" value="1"/>
</dbReference>
<dbReference type="Pfam" id="PF02225">
    <property type="entry name" value="PA"/>
    <property type="match status" value="1"/>
</dbReference>
<dbReference type="Pfam" id="PF13639">
    <property type="entry name" value="zf-RING_2"/>
    <property type="match status" value="1"/>
</dbReference>
<dbReference type="SMART" id="SM00184">
    <property type="entry name" value="RING"/>
    <property type="match status" value="1"/>
</dbReference>
<dbReference type="SUPFAM" id="SSF52025">
    <property type="entry name" value="PA domain"/>
    <property type="match status" value="1"/>
</dbReference>
<dbReference type="SUPFAM" id="SSF57850">
    <property type="entry name" value="RING/U-box"/>
    <property type="match status" value="1"/>
</dbReference>
<dbReference type="PROSITE" id="PS50089">
    <property type="entry name" value="ZF_RING_2"/>
    <property type="match status" value="1"/>
</dbReference>
<feature type="signal peptide" evidence="2">
    <location>
        <begin position="1"/>
        <end position="20"/>
    </location>
</feature>
<feature type="chain" id="PRO_0000425120" description="Receptor homology region, transmembrane domain- and RING domain-containing protein 6">
    <location>
        <begin position="21"/>
        <end position="318"/>
    </location>
</feature>
<feature type="topological domain" description="Lumenal" evidence="2">
    <location>
        <begin position="22"/>
        <end position="162"/>
    </location>
</feature>
<feature type="transmembrane region" description="Helical" evidence="2">
    <location>
        <begin position="163"/>
        <end position="183"/>
    </location>
</feature>
<feature type="topological domain" description="Cytoplasmic" evidence="2">
    <location>
        <begin position="184"/>
        <end position="318"/>
    </location>
</feature>
<feature type="domain" description="PA">
    <location>
        <begin position="70"/>
        <end position="143"/>
    </location>
</feature>
<feature type="zinc finger region" description="RING-type; atypical" evidence="3">
    <location>
        <begin position="233"/>
        <end position="275"/>
    </location>
</feature>
<feature type="glycosylation site" description="N-linked (GlcNAc...) asparagine" evidence="2">
    <location>
        <position position="121"/>
    </location>
</feature>
<feature type="disulfide bond" evidence="2">
    <location>
        <begin position="62"/>
        <end position="87"/>
    </location>
</feature>
<reference key="1">
    <citation type="journal article" date="2000" name="Nature">
        <title>Sequence and analysis of chromosome 1 of the plant Arabidopsis thaliana.</title>
        <authorList>
            <person name="Theologis A."/>
            <person name="Ecker J.R."/>
            <person name="Palm C.J."/>
            <person name="Federspiel N.A."/>
            <person name="Kaul S."/>
            <person name="White O."/>
            <person name="Alonso J."/>
            <person name="Altafi H."/>
            <person name="Araujo R."/>
            <person name="Bowman C.L."/>
            <person name="Brooks S.Y."/>
            <person name="Buehler E."/>
            <person name="Chan A."/>
            <person name="Chao Q."/>
            <person name="Chen H."/>
            <person name="Cheuk R.F."/>
            <person name="Chin C.W."/>
            <person name="Chung M.K."/>
            <person name="Conn L."/>
            <person name="Conway A.B."/>
            <person name="Conway A.R."/>
            <person name="Creasy T.H."/>
            <person name="Dewar K."/>
            <person name="Dunn P."/>
            <person name="Etgu P."/>
            <person name="Feldblyum T.V."/>
            <person name="Feng J.-D."/>
            <person name="Fong B."/>
            <person name="Fujii C.Y."/>
            <person name="Gill J.E."/>
            <person name="Goldsmith A.D."/>
            <person name="Haas B."/>
            <person name="Hansen N.F."/>
            <person name="Hughes B."/>
            <person name="Huizar L."/>
            <person name="Hunter J.L."/>
            <person name="Jenkins J."/>
            <person name="Johnson-Hopson C."/>
            <person name="Khan S."/>
            <person name="Khaykin E."/>
            <person name="Kim C.J."/>
            <person name="Koo H.L."/>
            <person name="Kremenetskaia I."/>
            <person name="Kurtz D.B."/>
            <person name="Kwan A."/>
            <person name="Lam B."/>
            <person name="Langin-Hooper S."/>
            <person name="Lee A."/>
            <person name="Lee J.M."/>
            <person name="Lenz C.A."/>
            <person name="Li J.H."/>
            <person name="Li Y.-P."/>
            <person name="Lin X."/>
            <person name="Liu S.X."/>
            <person name="Liu Z.A."/>
            <person name="Luros J.S."/>
            <person name="Maiti R."/>
            <person name="Marziali A."/>
            <person name="Militscher J."/>
            <person name="Miranda M."/>
            <person name="Nguyen M."/>
            <person name="Nierman W.C."/>
            <person name="Osborne B.I."/>
            <person name="Pai G."/>
            <person name="Peterson J."/>
            <person name="Pham P.K."/>
            <person name="Rizzo M."/>
            <person name="Rooney T."/>
            <person name="Rowley D."/>
            <person name="Sakano H."/>
            <person name="Salzberg S.L."/>
            <person name="Schwartz J.R."/>
            <person name="Shinn P."/>
            <person name="Southwick A.M."/>
            <person name="Sun H."/>
            <person name="Tallon L.J."/>
            <person name="Tambunga G."/>
            <person name="Toriumi M.J."/>
            <person name="Town C.D."/>
            <person name="Utterback T."/>
            <person name="Van Aken S."/>
            <person name="Vaysberg M."/>
            <person name="Vysotskaia V.S."/>
            <person name="Walker M."/>
            <person name="Wu D."/>
            <person name="Yu G."/>
            <person name="Fraser C.M."/>
            <person name="Venter J.C."/>
            <person name="Davis R.W."/>
        </authorList>
    </citation>
    <scope>NUCLEOTIDE SEQUENCE [LARGE SCALE GENOMIC DNA]</scope>
    <source>
        <strain>cv. Columbia</strain>
    </source>
</reference>
<reference key="2">
    <citation type="journal article" date="2017" name="Plant J.">
        <title>Araport11: a complete reannotation of the Arabidopsis thaliana reference genome.</title>
        <authorList>
            <person name="Cheng C.Y."/>
            <person name="Krishnakumar V."/>
            <person name="Chan A.P."/>
            <person name="Thibaud-Nissen F."/>
            <person name="Schobel S."/>
            <person name="Town C.D."/>
        </authorList>
    </citation>
    <scope>GENOME REANNOTATION</scope>
    <source>
        <strain>cv. Columbia</strain>
    </source>
</reference>
<organism>
    <name type="scientific">Arabidopsis thaliana</name>
    <name type="common">Mouse-ear cress</name>
    <dbReference type="NCBI Taxonomy" id="3702"/>
    <lineage>
        <taxon>Eukaryota</taxon>
        <taxon>Viridiplantae</taxon>
        <taxon>Streptophyta</taxon>
        <taxon>Embryophyta</taxon>
        <taxon>Tracheophyta</taxon>
        <taxon>Spermatophyta</taxon>
        <taxon>Magnoliopsida</taxon>
        <taxon>eudicotyledons</taxon>
        <taxon>Gunneridae</taxon>
        <taxon>Pentapetalae</taxon>
        <taxon>rosids</taxon>
        <taxon>malvids</taxon>
        <taxon>Brassicales</taxon>
        <taxon>Brassicaceae</taxon>
        <taxon>Camelineae</taxon>
        <taxon>Arabidopsis</taxon>
    </lineage>
</organism>
<name>RMR6_ARATH</name>
<sequence length="318" mass="35285">MNGSWITILSLLVISQLASSKVTLIGKNTFLSFDDVEANFTPVVRRSGEYGLLYAAEPLDACSYLTNMAEKGSKFRPSYVLIVRGGCSFEEKIRNAQEAGYKAAIVYNDRYEELLVRMAGNSSGVYIHGVLVTRTSGEVLKEYTSRAEMELLLIPGFGISSWSIMAITFVSLLVISAVLASYFSVRRHRIRQHVRDLHHGGQGHSRMPKDLLQSMPTEVYTGVLEEGSTSVTCAICIDDYRVGEILRILPCKHKYHAVCIDSWLGRCRSFCPVCKQNPRTGNDVPPASETTPLISPGPNSITSLQSFYDLPIVVRVYL</sequence>